<gene>
    <name type="primary">RAB29</name>
    <name type="synonym">RAB7L1</name>
</gene>
<name>RAB7L_HUMAN</name>
<organism>
    <name type="scientific">Homo sapiens</name>
    <name type="common">Human</name>
    <dbReference type="NCBI Taxonomy" id="9606"/>
    <lineage>
        <taxon>Eukaryota</taxon>
        <taxon>Metazoa</taxon>
        <taxon>Chordata</taxon>
        <taxon>Craniata</taxon>
        <taxon>Vertebrata</taxon>
        <taxon>Euteleostomi</taxon>
        <taxon>Mammalia</taxon>
        <taxon>Eutheria</taxon>
        <taxon>Euarchontoglires</taxon>
        <taxon>Primates</taxon>
        <taxon>Haplorrhini</taxon>
        <taxon>Catarrhini</taxon>
        <taxon>Hominidae</taxon>
        <taxon>Homo</taxon>
    </lineage>
</organism>
<protein>
    <recommendedName>
        <fullName>Ras-related protein Rab-7L1</fullName>
    </recommendedName>
    <alternativeName>
        <fullName>Rab-7-like protein 1</fullName>
    </alternativeName>
    <alternativeName>
        <fullName evidence="8">Ras-related protein Rab-29</fullName>
    </alternativeName>
</protein>
<comment type="function">
    <text evidence="2 3 4 5 6">The small GTPases Rab are key regulators in vesicle trafficking (PubMed:24788816). Essential for maintaining the integrity of the endosome-trans-Golgi network structure (By similarity). Together with LRRK2, plays a role in the retrograde trafficking pathway for recycling proteins, such as mannose 6 phosphate receptor (M6PR), between lysosomes and the Golgi apparatus in a retromer-dependent manner (PubMed:24788816). Recruits LRRK2 to the Golgi complex and stimulates LRRK2 kinase activity (PubMed:29212815, PubMed:38127736). Stimulates phosphorylation of RAB10 'Thr-73' by LRRK2 (PubMed:38127736). Regulates neuronal process morphology in the intact central nervous system (CNS) (By similarity). May play a role in the formation of typhoid toxin transport intermediates during Salmonella enterica serovar Typhi (S.typhi) epithelial cell infection (PubMed:22042847).</text>
</comment>
<comment type="subunit">
    <text evidence="5 6">Interacts with LRRK2 (via the N-terminus); this interaction is direct and stimulates kinase activity.</text>
</comment>
<comment type="interaction">
    <interactant intactId="EBI-372165">
        <id>O14966</id>
    </interactant>
    <interactant intactId="EBI-740738">
        <id>O95751</id>
        <label>LDOC1</label>
    </interactant>
    <organismsDiffer>false</organismsDiffer>
    <experiments>4</experiments>
</comment>
<comment type="interaction">
    <interactant intactId="EBI-372165">
        <id>O14966</id>
    </interactant>
    <interactant intactId="EBI-5323863">
        <id>Q5S007</id>
        <label>LRRK2</label>
    </interactant>
    <organismsDiffer>false</organismsDiffer>
    <experiments>15</experiments>
</comment>
<comment type="interaction">
    <interactant intactId="EBI-372165">
        <id>O14966</id>
    </interactant>
    <interactant intactId="EBI-10829018">
        <id>Q04864-2</id>
        <label>REL</label>
    </interactant>
    <organismsDiffer>false</organismsDiffer>
    <experiments>3</experiments>
</comment>
<comment type="interaction">
    <interactant intactId="EBI-372165">
        <id>O14966</id>
    </interactant>
    <interactant intactId="EBI-719493">
        <id>P14373</id>
        <label>TRIM27</label>
    </interactant>
    <organismsDiffer>false</organismsDiffer>
    <experiments>3</experiments>
</comment>
<comment type="interaction">
    <interactant intactId="EBI-372165">
        <id>O14966</id>
    </interactant>
    <interactant intactId="EBI-742790">
        <id>Q13049</id>
        <label>TRIM32</label>
    </interactant>
    <organismsDiffer>false</organismsDiffer>
    <experiments>3</experiments>
</comment>
<comment type="subcellular location">
    <subcellularLocation>
        <location evidence="6">Cell membrane</location>
        <topology evidence="9">Lipid-anchor</topology>
        <orientation evidence="9">Cytoplasmic side</orientation>
    </subcellularLocation>
    <subcellularLocation>
        <location evidence="4 5">Cytoplasm</location>
    </subcellularLocation>
    <subcellularLocation>
        <location evidence="4">Cytoplasm</location>
        <location evidence="4">Perinuclear region</location>
    </subcellularLocation>
    <subcellularLocation>
        <location evidence="3">Golgi apparatus</location>
    </subcellularLocation>
    <subcellularLocation>
        <location evidence="6">Golgi apparatus membrane</location>
    </subcellularLocation>
    <subcellularLocation>
        <location evidence="4 5">Golgi apparatus</location>
        <location evidence="4 5">trans-Golgi network</location>
    </subcellularLocation>
    <subcellularLocation>
        <location evidence="3">Vacuole</location>
    </subcellularLocation>
    <subcellularLocation>
        <location evidence="3">Cytoplasm</location>
        <location evidence="3">Cytoskeleton</location>
    </subcellularLocation>
    <text evidence="3 4 5 6">Colocalizes with LRRK2 along tubular structures emerging from Golgi apparatus (PubMed:29212815). Colocalizes with GM130 at the Golgi apparatus (PubMed:22042847). Colocalizes with dynamic tubules emerging from and retracting to the Golgi apparatus (PubMed:22042847, PubMed:38127736). Colocalizes with TGN46 at the trans-Golgi network (TGN) (PubMed:24788816). In Salmonella enterica serovar Typhi (S.typhi) infected epithelial cells, is recruited and colocalized with both S.typhi-containing vacuoles and dynamic tubules as well as those emerging from the vacuole toward the cell periphery (PubMed:22042847).</text>
</comment>
<comment type="alternative products">
    <event type="alternative splicing"/>
    <isoform>
        <id>O14966-1</id>
        <name>1</name>
        <sequence type="displayed"/>
    </isoform>
    <isoform>
        <id>O14966-2</id>
        <name>2</name>
        <sequence type="described" ref="VSP_043391"/>
    </isoform>
    <isoform>
        <id>O14966-3</id>
        <name>3</name>
        <sequence type="described" ref="VSP_045078"/>
    </isoform>
</comment>
<comment type="tissue specificity">
    <text evidence="4">Ubiquitous.</text>
</comment>
<comment type="PTM">
    <text evidence="3">In case of Salmonella enterica serovar Typhimurium (S.typhimurium) infection, is proteolytically cleaved between Gly-41 and Val-42 by the GtgE viral protease encoded on the Gifsy-2 lysogen bacteriophage, which therefore prevents the recruitment of RAB29 to S.typhimurium-containing vacuoles. In contrast, no proteolytically cleavage is detected in S.typhi-infected cells (PubMed:22042847).</text>
</comment>
<comment type="similarity">
    <text evidence="9">Belongs to the small GTPase superfamily. Rab family.</text>
</comment>
<evidence type="ECO:0000250" key="1"/>
<evidence type="ECO:0000250" key="2">
    <source>
        <dbReference type="UniProtKB" id="Q63481"/>
    </source>
</evidence>
<evidence type="ECO:0000269" key="3">
    <source>
    </source>
</evidence>
<evidence type="ECO:0000269" key="4">
    <source>
    </source>
</evidence>
<evidence type="ECO:0000269" key="5">
    <source>
    </source>
</evidence>
<evidence type="ECO:0000269" key="6">
    <source>
    </source>
</evidence>
<evidence type="ECO:0000303" key="7">
    <source>
    </source>
</evidence>
<evidence type="ECO:0000303" key="8">
    <source>
    </source>
</evidence>
<evidence type="ECO:0000305" key="9"/>
<evidence type="ECO:0000305" key="10">
    <source>
    </source>
</evidence>
<evidence type="ECO:0007744" key="11">
    <source>
        <dbReference type="PDB" id="8FO2"/>
    </source>
</evidence>
<evidence type="ECO:0007744" key="12">
    <source>
        <dbReference type="PDB" id="8FO8"/>
    </source>
</evidence>
<evidence type="ECO:0007744" key="13">
    <source>
        <dbReference type="PDB" id="8FO9"/>
    </source>
</evidence>
<evidence type="ECO:0007829" key="14">
    <source>
        <dbReference type="PDB" id="6HH2"/>
    </source>
</evidence>
<sequence length="203" mass="23155">MGSRDHLFKVLVVGDAAVGKTSLVQRYSQDSFSKHYKSTVGVDFALKVLQWSDYEIVRLQLWDIAGQERFTSMTRLYYRDASACVIMFDVTNATTFSNSQRWKQDLDSKLTLPNGEPVPCLLLANKCDLSPWAVSRDQIDRFSKENGFTGWTETSVKENKNINEAMRVLIEKMMRNSTEDIMSLSTQGDYINLQTKSSSWSCC</sequence>
<accession>O14966</accession>
<accession>B4E1K3</accession>
<accession>C9JE77</accession>
<feature type="chain" id="PRO_0000121127" description="Ras-related protein Rab-7L1">
    <location>
        <begin position="1"/>
        <end position="203"/>
    </location>
</feature>
<feature type="short sequence motif" description="Effector region" evidence="1">
    <location>
        <begin position="36"/>
        <end position="44"/>
    </location>
</feature>
<feature type="binding site" evidence="10 11">
    <location>
        <position position="33"/>
    </location>
    <ligand>
        <name>GTP</name>
        <dbReference type="ChEBI" id="CHEBI:37565"/>
    </ligand>
</feature>
<feature type="binding site" evidence="10 11">
    <location>
        <position position="34"/>
    </location>
    <ligand>
        <name>GTP</name>
        <dbReference type="ChEBI" id="CHEBI:37565"/>
    </ligand>
</feature>
<feature type="binding site" evidence="10 11">
    <location>
        <position position="35"/>
    </location>
    <ligand>
        <name>GTP</name>
        <dbReference type="ChEBI" id="CHEBI:37565"/>
    </ligand>
</feature>
<feature type="binding site" evidence="10 11">
    <location>
        <position position="36"/>
    </location>
    <ligand>
        <name>GTP</name>
        <dbReference type="ChEBI" id="CHEBI:37565"/>
    </ligand>
</feature>
<feature type="binding site" evidence="10 11">
    <location>
        <position position="37"/>
    </location>
    <ligand>
        <name>GTP</name>
        <dbReference type="ChEBI" id="CHEBI:37565"/>
    </ligand>
</feature>
<feature type="binding site" evidence="10 11">
    <location>
        <position position="39"/>
    </location>
    <ligand>
        <name>GTP</name>
        <dbReference type="ChEBI" id="CHEBI:37565"/>
    </ligand>
</feature>
<feature type="binding site" evidence="10 11">
    <location>
        <position position="126"/>
    </location>
    <ligand>
        <name>GTP</name>
        <dbReference type="ChEBI" id="CHEBI:37565"/>
    </ligand>
</feature>
<feature type="binding site" evidence="10 11">
    <location>
        <position position="156"/>
    </location>
    <ligand>
        <name>GTP</name>
        <dbReference type="ChEBI" id="CHEBI:37565"/>
    </ligand>
</feature>
<feature type="binding site" evidence="10 11">
    <location>
        <position position="157"/>
    </location>
    <ligand>
        <name>GTP</name>
        <dbReference type="ChEBI" id="CHEBI:37565"/>
    </ligand>
</feature>
<feature type="site" description="Cleavage; by S.typhimurium viral protease GtgE">
    <location>
        <begin position="41"/>
        <end position="42"/>
    </location>
</feature>
<feature type="modified residue" description="Phosphothreonine; by LRRK2" evidence="5 6">
    <location>
        <position position="71"/>
    </location>
</feature>
<feature type="modified residue" description="Phosphoserine; by LRRK2" evidence="5">
    <location>
        <position position="72"/>
    </location>
</feature>
<feature type="lipid moiety-binding region" description="S-geranylgeranyl cysteine" evidence="1">
    <location>
        <position position="202"/>
    </location>
</feature>
<feature type="lipid moiety-binding region" description="S-geranylgeranyl cysteine" evidence="1">
    <location>
        <position position="203"/>
    </location>
</feature>
<feature type="splice variant" id="VSP_045078" description="In isoform 3." evidence="7">
    <location>
        <begin position="1"/>
        <end position="72"/>
    </location>
</feature>
<feature type="splice variant" id="VSP_043391" description="In isoform 2." evidence="7">
    <location>
        <begin position="42"/>
        <end position="65"/>
    </location>
</feature>
<feature type="mutagenesis site" description="Abolishes interaction with LRRK2 and reduces membrane localization of LRRK2. Impairs RAB29-stimulated LRRK2 kinase activity on RAB10, RAB29 and LRRK2." evidence="6">
    <original>D</original>
    <variation>A</variation>
    <location>
        <position position="43"/>
    </location>
</feature>
<feature type="mutagenesis site" description="Abolishes interaction with LRRK2 and reduces membrane localization of LRRK2. Impairs RAB29-stimulated LRRK2 kinase activity on RAB10, RAB29 and LRRK2." evidence="6">
    <original>W</original>
    <variation>A</variation>
    <location>
        <position position="62"/>
    </location>
</feature>
<feature type="mutagenesis site" description="Reduces membrane localization of LRRK2 and impairs RAB29-stimulated LRRK2 kinase activity on RAB10 and LRRK2. Reduces membrane localization of LRRK2 and impairs RAB29-stimulated LRRK2 kinase activity on RAB10 and LRRK2; when associated with A-71 and A-72." evidence="6">
    <original>Q</original>
    <variation>L</variation>
    <location>
        <position position="67"/>
    </location>
</feature>
<feature type="mutagenesis site" description="Loss of phosphorylation by LRRK2. Impairs RAB29-stimulated LRRK2 kinase activity on RAB10 and LRRK2; when associated with A-72. Reduces membrane localization of LRRK2 and impairs RAB29-stimulated LRRK2 kinase activity on RAB10 and LRRK2; when associated with L-67 and A-72." evidence="5">
    <original>T</original>
    <variation>A</variation>
    <location>
        <position position="71"/>
    </location>
</feature>
<feature type="mutagenesis site" description="Loss of phosphorylation by LRRK2. Does not stimulate LRRK2 kinase activity; when associated with E-72." evidence="5">
    <original>T</original>
    <variation>E</variation>
    <location>
        <position position="71"/>
    </location>
</feature>
<feature type="mutagenesis site" description="Loss of phosphorylation by LRRK2. Impairs RAB29-stimulated LRRK2 kinase activity on RAB10 and LRRK2; when associated with A-71. Reduces membrane localization of LRRK2 and impairs RAB29-stimulated LRRK2 kinase activity on RAB10 and LRRK2; when associated with L-67 and A-71." evidence="5">
    <original>S</original>
    <variation>A</variation>
    <location>
        <position position="72"/>
    </location>
</feature>
<feature type="mutagenesis site" description="Loss of phosphorylation by LRRK2. Does not stimulate LRRK2 kinase activity; when associated with E-71." evidence="5">
    <original>S</original>
    <variation>E</variation>
    <location>
        <position position="72"/>
    </location>
</feature>
<feature type="mutagenesis site" description="Loss of LRRK2 binding. Does not stimulate LRRK2 kinase activity. Localized to the cytosol." evidence="5">
    <original>M</original>
    <variation>S</variation>
    <location>
        <position position="73"/>
    </location>
</feature>
<feature type="mutagenesis site" description="Loss of LRRK2 binding. Does not stimulate LRRK2 kinase activity. Localized to the cytosol." evidence="5">
    <original>R</original>
    <variation>S</variation>
    <location>
        <position position="75"/>
    </location>
</feature>
<feature type="strand" evidence="14">
    <location>
        <begin position="5"/>
        <end position="15"/>
    </location>
</feature>
<feature type="helix" evidence="14">
    <location>
        <begin position="20"/>
        <end position="27"/>
    </location>
</feature>
<feature type="turn" evidence="14">
    <location>
        <begin position="30"/>
        <end position="32"/>
    </location>
</feature>
<feature type="helix" evidence="14">
    <location>
        <begin position="37"/>
        <end position="40"/>
    </location>
</feature>
<feature type="strand" evidence="14">
    <location>
        <begin position="42"/>
        <end position="52"/>
    </location>
</feature>
<feature type="strand" evidence="14">
    <location>
        <begin position="55"/>
        <end position="63"/>
    </location>
</feature>
<feature type="helix" evidence="14">
    <location>
        <begin position="65"/>
        <end position="70"/>
    </location>
</feature>
<feature type="helix" evidence="14">
    <location>
        <begin position="75"/>
        <end position="78"/>
    </location>
</feature>
<feature type="strand" evidence="14">
    <location>
        <begin position="82"/>
        <end position="89"/>
    </location>
</feature>
<feature type="helix" evidence="14">
    <location>
        <begin position="93"/>
        <end position="109"/>
    </location>
</feature>
<feature type="strand" evidence="14">
    <location>
        <begin position="120"/>
        <end position="125"/>
    </location>
</feature>
<feature type="strand" evidence="14">
    <location>
        <begin position="129"/>
        <end position="131"/>
    </location>
</feature>
<feature type="helix" evidence="14">
    <location>
        <begin position="136"/>
        <end position="145"/>
    </location>
</feature>
<feature type="strand" evidence="14">
    <location>
        <begin position="149"/>
        <end position="153"/>
    </location>
</feature>
<feature type="turn" evidence="14">
    <location>
        <begin position="156"/>
        <end position="159"/>
    </location>
</feature>
<feature type="helix" evidence="14">
    <location>
        <begin position="162"/>
        <end position="175"/>
    </location>
</feature>
<proteinExistence type="evidence at protein level"/>
<keyword id="KW-0002">3D-structure</keyword>
<keyword id="KW-0025">Alternative splicing</keyword>
<keyword id="KW-1003">Cell membrane</keyword>
<keyword id="KW-0963">Cytoplasm</keyword>
<keyword id="KW-0206">Cytoskeleton</keyword>
<keyword id="KW-0221">Differentiation</keyword>
<keyword id="KW-0333">Golgi apparatus</keyword>
<keyword id="KW-0342">GTP-binding</keyword>
<keyword id="KW-0449">Lipoprotein</keyword>
<keyword id="KW-0472">Membrane</keyword>
<keyword id="KW-0547">Nucleotide-binding</keyword>
<keyword id="KW-0597">Phosphoprotein</keyword>
<keyword id="KW-0636">Prenylation</keyword>
<keyword id="KW-0653">Protein transport</keyword>
<keyword id="KW-1267">Proteomics identification</keyword>
<keyword id="KW-1185">Reference proteome</keyword>
<keyword id="KW-0813">Transport</keyword>
<keyword id="KW-0926">Vacuole</keyword>
<dbReference type="EMBL" id="D84488">
    <property type="protein sequence ID" value="BAA22160.1"/>
    <property type="molecule type" value="mRNA"/>
</dbReference>
<dbReference type="EMBL" id="AK308359">
    <property type="status" value="NOT_ANNOTATED_CDS"/>
    <property type="molecule type" value="mRNA"/>
</dbReference>
<dbReference type="EMBL" id="AK303879">
    <property type="protein sequence ID" value="BAG64815.1"/>
    <property type="molecule type" value="mRNA"/>
</dbReference>
<dbReference type="EMBL" id="AC119673">
    <property type="status" value="NOT_ANNOTATED_CDS"/>
    <property type="molecule type" value="Genomic_DNA"/>
</dbReference>
<dbReference type="EMBL" id="BC002585">
    <property type="protein sequence ID" value="AAH02585.1"/>
    <property type="molecule type" value="mRNA"/>
</dbReference>
<dbReference type="CCDS" id="CCDS1459.1">
    <molecule id="O14966-1"/>
</dbReference>
<dbReference type="CCDS" id="CCDS44301.1">
    <molecule id="O14966-2"/>
</dbReference>
<dbReference type="CCDS" id="CCDS44302.1">
    <molecule id="O14966-3"/>
</dbReference>
<dbReference type="RefSeq" id="NP_001129134.1">
    <molecule id="O14966-1"/>
    <property type="nucleotide sequence ID" value="NM_001135662.2"/>
</dbReference>
<dbReference type="RefSeq" id="NP_001129135.1">
    <molecule id="O14966-2"/>
    <property type="nucleotide sequence ID" value="NM_001135663.2"/>
</dbReference>
<dbReference type="RefSeq" id="NP_001129136.1">
    <molecule id="O14966-3"/>
    <property type="nucleotide sequence ID" value="NM_001135664.2"/>
</dbReference>
<dbReference type="RefSeq" id="NP_003920.1">
    <molecule id="O14966-1"/>
    <property type="nucleotide sequence ID" value="NM_003929.3"/>
</dbReference>
<dbReference type="RefSeq" id="XP_005245626.1">
    <molecule id="O14966-1"/>
    <property type="nucleotide sequence ID" value="XM_005245569.2"/>
</dbReference>
<dbReference type="RefSeq" id="XP_005245627.1">
    <molecule id="O14966-1"/>
    <property type="nucleotide sequence ID" value="XM_005245570.2"/>
</dbReference>
<dbReference type="RefSeq" id="XP_005245628.1">
    <molecule id="O14966-1"/>
    <property type="nucleotide sequence ID" value="XM_005245571.2"/>
</dbReference>
<dbReference type="RefSeq" id="XP_006711668.1">
    <molecule id="O14966-3"/>
    <property type="nucleotide sequence ID" value="XM_006711605.4"/>
</dbReference>
<dbReference type="RefSeq" id="XP_006711669.1">
    <molecule id="O14966-3"/>
    <property type="nucleotide sequence ID" value="XM_006711606.4"/>
</dbReference>
<dbReference type="RefSeq" id="XP_016858237.1">
    <molecule id="O14966-2"/>
    <property type="nucleotide sequence ID" value="XM_017002748.2"/>
</dbReference>
<dbReference type="RefSeq" id="XP_016858238.1">
    <molecule id="O14966-2"/>
    <property type="nucleotide sequence ID" value="XM_017002749.2"/>
</dbReference>
<dbReference type="RefSeq" id="XP_016858239.1">
    <molecule id="O14966-2"/>
    <property type="nucleotide sequence ID" value="XM_017002750.2"/>
</dbReference>
<dbReference type="RefSeq" id="XP_047289461.1">
    <molecule id="O14966-1"/>
    <property type="nucleotide sequence ID" value="XM_047433505.1"/>
</dbReference>
<dbReference type="RefSeq" id="XP_047289463.1">
    <molecule id="O14966-2"/>
    <property type="nucleotide sequence ID" value="XM_047433507.1"/>
</dbReference>
<dbReference type="RefSeq" id="XP_047289464.1">
    <molecule id="O14966-2"/>
    <property type="nucleotide sequence ID" value="XM_047433508.1"/>
</dbReference>
<dbReference type="RefSeq" id="XP_047289465.1">
    <molecule id="O14966-2"/>
    <property type="nucleotide sequence ID" value="XM_047433509.1"/>
</dbReference>
<dbReference type="RefSeq" id="XP_054195444.1">
    <molecule id="O14966-1"/>
    <property type="nucleotide sequence ID" value="XM_054339469.1"/>
</dbReference>
<dbReference type="RefSeq" id="XP_054195445.1">
    <molecule id="O14966-1"/>
    <property type="nucleotide sequence ID" value="XM_054339470.1"/>
</dbReference>
<dbReference type="RefSeq" id="XP_054195446.1">
    <molecule id="O14966-1"/>
    <property type="nucleotide sequence ID" value="XM_054339471.1"/>
</dbReference>
<dbReference type="RefSeq" id="XP_054195447.1">
    <molecule id="O14966-1"/>
    <property type="nucleotide sequence ID" value="XM_054339472.1"/>
</dbReference>
<dbReference type="RefSeq" id="XP_054195448.1">
    <molecule id="O14966-2"/>
    <property type="nucleotide sequence ID" value="XM_054339473.1"/>
</dbReference>
<dbReference type="RefSeq" id="XP_054195449.1">
    <molecule id="O14966-2"/>
    <property type="nucleotide sequence ID" value="XM_054339474.1"/>
</dbReference>
<dbReference type="RefSeq" id="XP_054195450.1">
    <molecule id="O14966-2"/>
    <property type="nucleotide sequence ID" value="XM_054339475.1"/>
</dbReference>
<dbReference type="RefSeq" id="XP_054195451.1">
    <molecule id="O14966-2"/>
    <property type="nucleotide sequence ID" value="XM_054339476.1"/>
</dbReference>
<dbReference type="RefSeq" id="XP_054195452.1">
    <molecule id="O14966-2"/>
    <property type="nucleotide sequence ID" value="XM_054339477.1"/>
</dbReference>
<dbReference type="RefSeq" id="XP_054195453.1">
    <molecule id="O14966-2"/>
    <property type="nucleotide sequence ID" value="XM_054339478.1"/>
</dbReference>
<dbReference type="RefSeq" id="XP_054195454.1">
    <molecule id="O14966-3"/>
    <property type="nucleotide sequence ID" value="XM_054339479.1"/>
</dbReference>
<dbReference type="RefSeq" id="XP_054195455.1">
    <molecule id="O14966-3"/>
    <property type="nucleotide sequence ID" value="XM_054339480.1"/>
</dbReference>
<dbReference type="PDB" id="6HH2">
    <property type="method" value="X-ray"/>
    <property type="resolution" value="1.45 A"/>
    <property type="chains" value="A=1-177"/>
</dbReference>
<dbReference type="PDB" id="8FO2">
    <property type="method" value="EM"/>
    <property type="resolution" value="4.13 A"/>
    <property type="chains" value="B=1-177"/>
</dbReference>
<dbReference type="PDB" id="8FO8">
    <property type="method" value="EM"/>
    <property type="resolution" value="3.88 A"/>
    <property type="chains" value="A/B=1-177"/>
</dbReference>
<dbReference type="PDB" id="8FO9">
    <property type="method" value="EM"/>
    <property type="resolution" value="3.48 A"/>
    <property type="chains" value="B/D=1-177"/>
</dbReference>
<dbReference type="PDBsum" id="6HH2"/>
<dbReference type="PDBsum" id="8FO2"/>
<dbReference type="PDBsum" id="8FO8"/>
<dbReference type="PDBsum" id="8FO9"/>
<dbReference type="EMDB" id="EMD-29339"/>
<dbReference type="EMDB" id="EMD-29341"/>
<dbReference type="EMDB" id="EMD-29342"/>
<dbReference type="SMR" id="O14966"/>
<dbReference type="BioGRID" id="114447">
    <property type="interactions" value="141"/>
</dbReference>
<dbReference type="DIP" id="DIP-31215N"/>
<dbReference type="FunCoup" id="O14966">
    <property type="interactions" value="840"/>
</dbReference>
<dbReference type="IntAct" id="O14966">
    <property type="interactions" value="74"/>
</dbReference>
<dbReference type="MINT" id="O14966"/>
<dbReference type="STRING" id="9606.ENSP00000356107"/>
<dbReference type="BindingDB" id="O14966"/>
<dbReference type="ChEMBL" id="CHEMBL3879836"/>
<dbReference type="iPTMnet" id="O14966"/>
<dbReference type="PhosphoSitePlus" id="O14966"/>
<dbReference type="SwissPalm" id="O14966"/>
<dbReference type="BioMuta" id="RAB29"/>
<dbReference type="jPOST" id="O14966"/>
<dbReference type="MassIVE" id="O14966"/>
<dbReference type="PaxDb" id="9606-ENSP00000356107"/>
<dbReference type="PeptideAtlas" id="O14966"/>
<dbReference type="ProteomicsDB" id="48340">
    <molecule id="O14966-1"/>
</dbReference>
<dbReference type="ProteomicsDB" id="48341">
    <molecule id="O14966-2"/>
</dbReference>
<dbReference type="ProteomicsDB" id="9821"/>
<dbReference type="Pumba" id="O14966"/>
<dbReference type="Antibodypedia" id="20685">
    <property type="antibodies" value="167 antibodies from 28 providers"/>
</dbReference>
<dbReference type="DNASU" id="8934"/>
<dbReference type="Ensembl" id="ENST00000235932.8">
    <molecule id="O14966-1"/>
    <property type="protein sequence ID" value="ENSP00000235932.4"/>
    <property type="gene ID" value="ENSG00000117280.13"/>
</dbReference>
<dbReference type="Ensembl" id="ENST00000367139.8">
    <molecule id="O14966-1"/>
    <property type="protein sequence ID" value="ENSP00000356107.3"/>
    <property type="gene ID" value="ENSG00000117280.13"/>
</dbReference>
<dbReference type="Ensembl" id="ENST00000414729.1">
    <molecule id="O14966-1"/>
    <property type="protein sequence ID" value="ENSP00000402910.1"/>
    <property type="gene ID" value="ENSG00000117280.13"/>
</dbReference>
<dbReference type="Ensembl" id="ENST00000437324.6">
    <molecule id="O14966-3"/>
    <property type="protein sequence ID" value="ENSP00000416613.2"/>
    <property type="gene ID" value="ENSG00000117280.13"/>
</dbReference>
<dbReference type="Ensembl" id="ENST00000446390.6">
    <molecule id="O14966-2"/>
    <property type="protein sequence ID" value="ENSP00000389899.2"/>
    <property type="gene ID" value="ENSG00000117280.13"/>
</dbReference>
<dbReference type="GeneID" id="8934"/>
<dbReference type="KEGG" id="hsa:8934"/>
<dbReference type="MANE-Select" id="ENST00000367139.8">
    <property type="protein sequence ID" value="ENSP00000356107.3"/>
    <property type="RefSeq nucleotide sequence ID" value="NM_003929.3"/>
    <property type="RefSeq protein sequence ID" value="NP_003920.1"/>
</dbReference>
<dbReference type="UCSC" id="uc009xbp.4">
    <molecule id="O14966-1"/>
    <property type="organism name" value="human"/>
</dbReference>
<dbReference type="AGR" id="HGNC:9789"/>
<dbReference type="CTD" id="8934"/>
<dbReference type="DisGeNET" id="8934"/>
<dbReference type="GeneCards" id="RAB29"/>
<dbReference type="HGNC" id="HGNC:9789">
    <property type="gene designation" value="RAB29"/>
</dbReference>
<dbReference type="HPA" id="ENSG00000117280">
    <property type="expression patterns" value="Tissue enhanced (kidney)"/>
</dbReference>
<dbReference type="MalaCards" id="RAB29"/>
<dbReference type="MIM" id="603949">
    <property type="type" value="gene"/>
</dbReference>
<dbReference type="neXtProt" id="NX_O14966"/>
<dbReference type="OpenTargets" id="ENSG00000117280"/>
<dbReference type="PharmGKB" id="PA34151"/>
<dbReference type="VEuPathDB" id="HostDB:ENSG00000117280"/>
<dbReference type="eggNOG" id="KOG4423">
    <property type="taxonomic scope" value="Eukaryota"/>
</dbReference>
<dbReference type="GeneTree" id="ENSGT00940000159363"/>
<dbReference type="HOGENOM" id="CLU_041217_10_6_1"/>
<dbReference type="InParanoid" id="O14966"/>
<dbReference type="OMA" id="NNFIGWT"/>
<dbReference type="OrthoDB" id="245989at2759"/>
<dbReference type="PAN-GO" id="O14966">
    <property type="GO annotations" value="6 GO annotations based on evolutionary models"/>
</dbReference>
<dbReference type="PhylomeDB" id="O14966"/>
<dbReference type="TreeFam" id="TF324491"/>
<dbReference type="PathwayCommons" id="O14966"/>
<dbReference type="Reactome" id="R-HSA-8873719">
    <property type="pathway name" value="RAB geranylgeranylation"/>
</dbReference>
<dbReference type="SignaLink" id="O14966"/>
<dbReference type="BioGRID-ORCS" id="8934">
    <property type="hits" value="11 hits in 1155 CRISPR screens"/>
</dbReference>
<dbReference type="ChiTaRS" id="RAB29">
    <property type="organism name" value="human"/>
</dbReference>
<dbReference type="GenomeRNAi" id="8934"/>
<dbReference type="Pharos" id="O14966">
    <property type="development level" value="Tchem"/>
</dbReference>
<dbReference type="PRO" id="PR:O14966"/>
<dbReference type="Proteomes" id="UP000005640">
    <property type="component" value="Chromosome 1"/>
</dbReference>
<dbReference type="RNAct" id="O14966">
    <property type="molecule type" value="protein"/>
</dbReference>
<dbReference type="Bgee" id="ENSG00000117280">
    <property type="expression patterns" value="Expressed in nephron tubule and 199 other cell types or tissues"/>
</dbReference>
<dbReference type="ExpressionAtlas" id="O14966">
    <property type="expression patterns" value="baseline and differential"/>
</dbReference>
<dbReference type="GO" id="GO:0005801">
    <property type="term" value="C:cis-Golgi network"/>
    <property type="evidence" value="ECO:0000314"/>
    <property type="project" value="ParkinsonsUK-UCL"/>
</dbReference>
<dbReference type="GO" id="GO:0005737">
    <property type="term" value="C:cytoplasm"/>
    <property type="evidence" value="ECO:0000314"/>
    <property type="project" value="UniProtKB"/>
</dbReference>
<dbReference type="GO" id="GO:0005856">
    <property type="term" value="C:cytoskeleton"/>
    <property type="evidence" value="ECO:0007669"/>
    <property type="project" value="UniProtKB-SubCell"/>
</dbReference>
<dbReference type="GO" id="GO:0005829">
    <property type="term" value="C:cytosol"/>
    <property type="evidence" value="ECO:0000314"/>
    <property type="project" value="HPA"/>
</dbReference>
<dbReference type="GO" id="GO:0005769">
    <property type="term" value="C:early endosome"/>
    <property type="evidence" value="ECO:0000314"/>
    <property type="project" value="ParkinsonsUK-UCL"/>
</dbReference>
<dbReference type="GO" id="GO:0012505">
    <property type="term" value="C:endomembrane system"/>
    <property type="evidence" value="ECO:0000318"/>
    <property type="project" value="GO_Central"/>
</dbReference>
<dbReference type="GO" id="GO:0070062">
    <property type="term" value="C:extracellular exosome"/>
    <property type="evidence" value="ECO:0007005"/>
    <property type="project" value="UniProtKB"/>
</dbReference>
<dbReference type="GO" id="GO:0005794">
    <property type="term" value="C:Golgi apparatus"/>
    <property type="evidence" value="ECO:0000314"/>
    <property type="project" value="ParkinsonsUK-UCL"/>
</dbReference>
<dbReference type="GO" id="GO:0000139">
    <property type="term" value="C:Golgi membrane"/>
    <property type="evidence" value="ECO:0007669"/>
    <property type="project" value="UniProtKB-SubCell"/>
</dbReference>
<dbReference type="GO" id="GO:0043231">
    <property type="term" value="C:intracellular membrane-bounded organelle"/>
    <property type="evidence" value="ECO:0000314"/>
    <property type="project" value="HPA"/>
</dbReference>
<dbReference type="GO" id="GO:0097708">
    <property type="term" value="C:intracellular vesicle"/>
    <property type="evidence" value="ECO:0000314"/>
    <property type="project" value="ParkinsonsUK-UCL"/>
</dbReference>
<dbReference type="GO" id="GO:0042470">
    <property type="term" value="C:melanosome"/>
    <property type="evidence" value="ECO:0000318"/>
    <property type="project" value="GO_Central"/>
</dbReference>
<dbReference type="GO" id="GO:0005739">
    <property type="term" value="C:mitochondrion"/>
    <property type="evidence" value="ECO:0000314"/>
    <property type="project" value="ParkinsonsUK-UCL"/>
</dbReference>
<dbReference type="GO" id="GO:0031965">
    <property type="term" value="C:nuclear membrane"/>
    <property type="evidence" value="ECO:0000314"/>
    <property type="project" value="HPA"/>
</dbReference>
<dbReference type="GO" id="GO:0005654">
    <property type="term" value="C:nucleoplasm"/>
    <property type="evidence" value="ECO:0000314"/>
    <property type="project" value="HPA"/>
</dbReference>
<dbReference type="GO" id="GO:0048471">
    <property type="term" value="C:perinuclear region of cytoplasm"/>
    <property type="evidence" value="ECO:0007669"/>
    <property type="project" value="UniProtKB-SubCell"/>
</dbReference>
<dbReference type="GO" id="GO:0005886">
    <property type="term" value="C:plasma membrane"/>
    <property type="evidence" value="ECO:0007669"/>
    <property type="project" value="UniProtKB-SubCell"/>
</dbReference>
<dbReference type="GO" id="GO:0055037">
    <property type="term" value="C:recycling endosome"/>
    <property type="evidence" value="ECO:0000314"/>
    <property type="project" value="ParkinsonsUK-UCL"/>
</dbReference>
<dbReference type="GO" id="GO:0005802">
    <property type="term" value="C:trans-Golgi network"/>
    <property type="evidence" value="ECO:0000314"/>
    <property type="project" value="UniProtKB"/>
</dbReference>
<dbReference type="GO" id="GO:0005773">
    <property type="term" value="C:vacuole"/>
    <property type="evidence" value="ECO:0000314"/>
    <property type="project" value="ParkinsonsUK-UCL"/>
</dbReference>
<dbReference type="GO" id="GO:0070840">
    <property type="term" value="F:dynein complex binding"/>
    <property type="evidence" value="ECO:0000314"/>
    <property type="project" value="ParkinsonsUK-UCL"/>
</dbReference>
<dbReference type="GO" id="GO:0019003">
    <property type="term" value="F:GDP binding"/>
    <property type="evidence" value="ECO:0000314"/>
    <property type="project" value="ParkinsonsUK-UCL"/>
</dbReference>
<dbReference type="GO" id="GO:0005525">
    <property type="term" value="F:GTP binding"/>
    <property type="evidence" value="ECO:0000314"/>
    <property type="project" value="ParkinsonsUK-UCL"/>
</dbReference>
<dbReference type="GO" id="GO:0003924">
    <property type="term" value="F:GTPase activity"/>
    <property type="evidence" value="ECO:0000318"/>
    <property type="project" value="GO_Central"/>
</dbReference>
<dbReference type="GO" id="GO:0019894">
    <property type="term" value="F:kinesin binding"/>
    <property type="evidence" value="ECO:0000353"/>
    <property type="project" value="ParkinsonsUK-UCL"/>
</dbReference>
<dbReference type="GO" id="GO:0031267">
    <property type="term" value="F:small GTPase binding"/>
    <property type="evidence" value="ECO:0000314"/>
    <property type="project" value="ParkinsonsUK-UCL"/>
</dbReference>
<dbReference type="GO" id="GO:0030154">
    <property type="term" value="P:cell differentiation"/>
    <property type="evidence" value="ECO:0007669"/>
    <property type="project" value="UniProtKB-KW"/>
</dbReference>
<dbReference type="GO" id="GO:1990748">
    <property type="term" value="P:cellular detoxification"/>
    <property type="evidence" value="ECO:0000315"/>
    <property type="project" value="ParkinsonsUK-UCL"/>
</dbReference>
<dbReference type="GO" id="GO:0007030">
    <property type="term" value="P:Golgi organization"/>
    <property type="evidence" value="ECO:0000315"/>
    <property type="project" value="UniProtKB"/>
</dbReference>
<dbReference type="GO" id="GO:0006886">
    <property type="term" value="P:intracellular protein transport"/>
    <property type="evidence" value="ECO:0000318"/>
    <property type="project" value="GO_Central"/>
</dbReference>
<dbReference type="GO" id="GO:0032438">
    <property type="term" value="P:melanosome organization"/>
    <property type="evidence" value="ECO:0000318"/>
    <property type="project" value="GO_Central"/>
</dbReference>
<dbReference type="GO" id="GO:0007005">
    <property type="term" value="P:mitochondrion organization"/>
    <property type="evidence" value="ECO:0000315"/>
    <property type="project" value="ParkinsonsUK-UCL"/>
</dbReference>
<dbReference type="GO" id="GO:0044788">
    <property type="term" value="P:modulation by host of viral process"/>
    <property type="evidence" value="ECO:0000315"/>
    <property type="project" value="ParkinsonsUK-UCL"/>
</dbReference>
<dbReference type="GO" id="GO:0010977">
    <property type="term" value="P:negative regulation of neuron projection development"/>
    <property type="evidence" value="ECO:0000314"/>
    <property type="project" value="ParkinsonsUK-UCL"/>
</dbReference>
<dbReference type="GO" id="GO:0090316">
    <property type="term" value="P:positive regulation of intracellular protein transport"/>
    <property type="evidence" value="ECO:0000315"/>
    <property type="project" value="UniProtKB"/>
</dbReference>
<dbReference type="GO" id="GO:0001921">
    <property type="term" value="P:positive regulation of receptor recycling"/>
    <property type="evidence" value="ECO:0000315"/>
    <property type="project" value="ParkinsonsUK-UCL"/>
</dbReference>
<dbReference type="GO" id="GO:0050862">
    <property type="term" value="P:positive regulation of T cell receptor signaling pathway"/>
    <property type="evidence" value="ECO:0000315"/>
    <property type="project" value="ParkinsonsUK-UCL"/>
</dbReference>
<dbReference type="GO" id="GO:1903441">
    <property type="term" value="P:protein localization to ciliary membrane"/>
    <property type="evidence" value="ECO:0000250"/>
    <property type="project" value="ParkinsonsUK-UCL"/>
</dbReference>
<dbReference type="GO" id="GO:0072657">
    <property type="term" value="P:protein localization to membrane"/>
    <property type="evidence" value="ECO:0000315"/>
    <property type="project" value="ParkinsonsUK-UCL"/>
</dbReference>
<dbReference type="GO" id="GO:1905279">
    <property type="term" value="P:regulation of retrograde transport, endosome to Golgi"/>
    <property type="evidence" value="ECO:0007669"/>
    <property type="project" value="Ensembl"/>
</dbReference>
<dbReference type="GO" id="GO:0009617">
    <property type="term" value="P:response to bacterium"/>
    <property type="evidence" value="ECO:0000314"/>
    <property type="project" value="ParkinsonsUK-UCL"/>
</dbReference>
<dbReference type="GO" id="GO:0042147">
    <property type="term" value="P:retrograde transport, endosome to Golgi"/>
    <property type="evidence" value="ECO:0000315"/>
    <property type="project" value="UniProtKB"/>
</dbReference>
<dbReference type="GO" id="GO:0007416">
    <property type="term" value="P:synapse assembly"/>
    <property type="evidence" value="ECO:0000315"/>
    <property type="project" value="ParkinsonsUK-UCL"/>
</dbReference>
<dbReference type="GO" id="GO:0042110">
    <property type="term" value="P:T cell activation"/>
    <property type="evidence" value="ECO:0000315"/>
    <property type="project" value="ParkinsonsUK-UCL"/>
</dbReference>
<dbReference type="CDD" id="cd04107">
    <property type="entry name" value="Rab32_Rab38"/>
    <property type="match status" value="1"/>
</dbReference>
<dbReference type="FunFam" id="3.40.50.300:FF:000222">
    <property type="entry name" value="RAB32, member RAS oncogene family"/>
    <property type="match status" value="1"/>
</dbReference>
<dbReference type="Gene3D" id="3.40.50.300">
    <property type="entry name" value="P-loop containing nucleotide triphosphate hydrolases"/>
    <property type="match status" value="1"/>
</dbReference>
<dbReference type="InterPro" id="IPR027417">
    <property type="entry name" value="P-loop_NTPase"/>
</dbReference>
<dbReference type="InterPro" id="IPR030697">
    <property type="entry name" value="Rab29/Rab38/Rab32"/>
</dbReference>
<dbReference type="InterPro" id="IPR005225">
    <property type="entry name" value="Small_GTP-bd"/>
</dbReference>
<dbReference type="InterPro" id="IPR001806">
    <property type="entry name" value="Small_GTPase"/>
</dbReference>
<dbReference type="NCBIfam" id="TIGR00231">
    <property type="entry name" value="small_GTP"/>
    <property type="match status" value="1"/>
</dbReference>
<dbReference type="PANTHER" id="PTHR47981">
    <property type="entry name" value="RAB FAMILY"/>
    <property type="match status" value="1"/>
</dbReference>
<dbReference type="PANTHER" id="PTHR47981:SF42">
    <property type="entry name" value="RAS-RELATED PROTEIN RAB-7L1-LIKE ISOFORM X1"/>
    <property type="match status" value="1"/>
</dbReference>
<dbReference type="Pfam" id="PF00071">
    <property type="entry name" value="Ras"/>
    <property type="match status" value="1"/>
</dbReference>
<dbReference type="PRINTS" id="PR00449">
    <property type="entry name" value="RASTRNSFRMNG"/>
</dbReference>
<dbReference type="SMART" id="SM00175">
    <property type="entry name" value="RAB"/>
    <property type="match status" value="1"/>
</dbReference>
<dbReference type="SMART" id="SM00176">
    <property type="entry name" value="RAN"/>
    <property type="match status" value="1"/>
</dbReference>
<dbReference type="SMART" id="SM00173">
    <property type="entry name" value="RAS"/>
    <property type="match status" value="1"/>
</dbReference>
<dbReference type="SMART" id="SM00174">
    <property type="entry name" value="RHO"/>
    <property type="match status" value="1"/>
</dbReference>
<dbReference type="SUPFAM" id="SSF52540">
    <property type="entry name" value="P-loop containing nucleoside triphosphate hydrolases"/>
    <property type="match status" value="1"/>
</dbReference>
<dbReference type="PROSITE" id="PS51419">
    <property type="entry name" value="RAB"/>
    <property type="match status" value="1"/>
</dbReference>
<reference key="1">
    <citation type="journal article" date="1997" name="Cytogenet. Cell Genet.">
        <title>Cloning and chromosome assignment to 1q32 of a human cDNA (RAB7L1) encoding a small GTP-binding protein, a member of the RAS superfamily.</title>
        <authorList>
            <person name="Shimizu F."/>
            <person name="Katagiri T."/>
            <person name="Suzuki M."/>
            <person name="Watanabe T.K."/>
            <person name="Okuno S."/>
            <person name="Kuga Y."/>
            <person name="Nagata M."/>
            <person name="Fujiwara T."/>
            <person name="Nakamura Y."/>
            <person name="Takahashi E."/>
        </authorList>
    </citation>
    <scope>NUCLEOTIDE SEQUENCE [MRNA] (ISOFORM 1)</scope>
    <source>
        <tissue>Placenta</tissue>
    </source>
</reference>
<reference key="2">
    <citation type="journal article" date="2004" name="Nat. Genet.">
        <title>Complete sequencing and characterization of 21,243 full-length human cDNAs.</title>
        <authorList>
            <person name="Ota T."/>
            <person name="Suzuki Y."/>
            <person name="Nishikawa T."/>
            <person name="Otsuki T."/>
            <person name="Sugiyama T."/>
            <person name="Irie R."/>
            <person name="Wakamatsu A."/>
            <person name="Hayashi K."/>
            <person name="Sato H."/>
            <person name="Nagai K."/>
            <person name="Kimura K."/>
            <person name="Makita H."/>
            <person name="Sekine M."/>
            <person name="Obayashi M."/>
            <person name="Nishi T."/>
            <person name="Shibahara T."/>
            <person name="Tanaka T."/>
            <person name="Ishii S."/>
            <person name="Yamamoto J."/>
            <person name="Saito K."/>
            <person name="Kawai Y."/>
            <person name="Isono Y."/>
            <person name="Nakamura Y."/>
            <person name="Nagahari K."/>
            <person name="Murakami K."/>
            <person name="Yasuda T."/>
            <person name="Iwayanagi T."/>
            <person name="Wagatsuma M."/>
            <person name="Shiratori A."/>
            <person name="Sudo H."/>
            <person name="Hosoiri T."/>
            <person name="Kaku Y."/>
            <person name="Kodaira H."/>
            <person name="Kondo H."/>
            <person name="Sugawara M."/>
            <person name="Takahashi M."/>
            <person name="Kanda K."/>
            <person name="Yokoi T."/>
            <person name="Furuya T."/>
            <person name="Kikkawa E."/>
            <person name="Omura Y."/>
            <person name="Abe K."/>
            <person name="Kamihara K."/>
            <person name="Katsuta N."/>
            <person name="Sato K."/>
            <person name="Tanikawa M."/>
            <person name="Yamazaki M."/>
            <person name="Ninomiya K."/>
            <person name="Ishibashi T."/>
            <person name="Yamashita H."/>
            <person name="Murakawa K."/>
            <person name="Fujimori K."/>
            <person name="Tanai H."/>
            <person name="Kimata M."/>
            <person name="Watanabe M."/>
            <person name="Hiraoka S."/>
            <person name="Chiba Y."/>
            <person name="Ishida S."/>
            <person name="Ono Y."/>
            <person name="Takiguchi S."/>
            <person name="Watanabe S."/>
            <person name="Yosida M."/>
            <person name="Hotuta T."/>
            <person name="Kusano J."/>
            <person name="Kanehori K."/>
            <person name="Takahashi-Fujii A."/>
            <person name="Hara H."/>
            <person name="Tanase T.-O."/>
            <person name="Nomura Y."/>
            <person name="Togiya S."/>
            <person name="Komai F."/>
            <person name="Hara R."/>
            <person name="Takeuchi K."/>
            <person name="Arita M."/>
            <person name="Imose N."/>
            <person name="Musashino K."/>
            <person name="Yuuki H."/>
            <person name="Oshima A."/>
            <person name="Sasaki N."/>
            <person name="Aotsuka S."/>
            <person name="Yoshikawa Y."/>
            <person name="Matsunawa H."/>
            <person name="Ichihara T."/>
            <person name="Shiohata N."/>
            <person name="Sano S."/>
            <person name="Moriya S."/>
            <person name="Momiyama H."/>
            <person name="Satoh N."/>
            <person name="Takami S."/>
            <person name="Terashima Y."/>
            <person name="Suzuki O."/>
            <person name="Nakagawa S."/>
            <person name="Senoh A."/>
            <person name="Mizoguchi H."/>
            <person name="Goto Y."/>
            <person name="Shimizu F."/>
            <person name="Wakebe H."/>
            <person name="Hishigaki H."/>
            <person name="Watanabe T."/>
            <person name="Sugiyama A."/>
            <person name="Takemoto M."/>
            <person name="Kawakami B."/>
            <person name="Yamazaki M."/>
            <person name="Watanabe K."/>
            <person name="Kumagai A."/>
            <person name="Itakura S."/>
            <person name="Fukuzumi Y."/>
            <person name="Fujimori Y."/>
            <person name="Komiyama M."/>
            <person name="Tashiro H."/>
            <person name="Tanigami A."/>
            <person name="Fujiwara T."/>
            <person name="Ono T."/>
            <person name="Yamada K."/>
            <person name="Fujii Y."/>
            <person name="Ozaki K."/>
            <person name="Hirao M."/>
            <person name="Ohmori Y."/>
            <person name="Kawabata A."/>
            <person name="Hikiji T."/>
            <person name="Kobatake N."/>
            <person name="Inagaki H."/>
            <person name="Ikema Y."/>
            <person name="Okamoto S."/>
            <person name="Okitani R."/>
            <person name="Kawakami T."/>
            <person name="Noguchi S."/>
            <person name="Itoh T."/>
            <person name="Shigeta K."/>
            <person name="Senba T."/>
            <person name="Matsumura K."/>
            <person name="Nakajima Y."/>
            <person name="Mizuno T."/>
            <person name="Morinaga M."/>
            <person name="Sasaki M."/>
            <person name="Togashi T."/>
            <person name="Oyama M."/>
            <person name="Hata H."/>
            <person name="Watanabe M."/>
            <person name="Komatsu T."/>
            <person name="Mizushima-Sugano J."/>
            <person name="Satoh T."/>
            <person name="Shirai Y."/>
            <person name="Takahashi Y."/>
            <person name="Nakagawa K."/>
            <person name="Okumura K."/>
            <person name="Nagase T."/>
            <person name="Nomura N."/>
            <person name="Kikuchi H."/>
            <person name="Masuho Y."/>
            <person name="Yamashita R."/>
            <person name="Nakai K."/>
            <person name="Yada T."/>
            <person name="Nakamura Y."/>
            <person name="Ohara O."/>
            <person name="Isogai T."/>
            <person name="Sugano S."/>
        </authorList>
    </citation>
    <scope>NUCLEOTIDE SEQUENCE [LARGE SCALE MRNA] (ISOFORMS 2 AND 3)</scope>
    <source>
        <tissue>Thymus</tissue>
        <tissue>Trachea</tissue>
    </source>
</reference>
<reference key="3">
    <citation type="journal article" date="2006" name="Nature">
        <title>The DNA sequence and biological annotation of human chromosome 1.</title>
        <authorList>
            <person name="Gregory S.G."/>
            <person name="Barlow K.F."/>
            <person name="McLay K.E."/>
            <person name="Kaul R."/>
            <person name="Swarbreck D."/>
            <person name="Dunham A."/>
            <person name="Scott C.E."/>
            <person name="Howe K.L."/>
            <person name="Woodfine K."/>
            <person name="Spencer C.C.A."/>
            <person name="Jones M.C."/>
            <person name="Gillson C."/>
            <person name="Searle S."/>
            <person name="Zhou Y."/>
            <person name="Kokocinski F."/>
            <person name="McDonald L."/>
            <person name="Evans R."/>
            <person name="Phillips K."/>
            <person name="Atkinson A."/>
            <person name="Cooper R."/>
            <person name="Jones C."/>
            <person name="Hall R.E."/>
            <person name="Andrews T.D."/>
            <person name="Lloyd C."/>
            <person name="Ainscough R."/>
            <person name="Almeida J.P."/>
            <person name="Ambrose K.D."/>
            <person name="Anderson F."/>
            <person name="Andrew R.W."/>
            <person name="Ashwell R.I.S."/>
            <person name="Aubin K."/>
            <person name="Babbage A.K."/>
            <person name="Bagguley C.L."/>
            <person name="Bailey J."/>
            <person name="Beasley H."/>
            <person name="Bethel G."/>
            <person name="Bird C.P."/>
            <person name="Bray-Allen S."/>
            <person name="Brown J.Y."/>
            <person name="Brown A.J."/>
            <person name="Buckley D."/>
            <person name="Burton J."/>
            <person name="Bye J."/>
            <person name="Carder C."/>
            <person name="Chapman J.C."/>
            <person name="Clark S.Y."/>
            <person name="Clarke G."/>
            <person name="Clee C."/>
            <person name="Cobley V."/>
            <person name="Collier R.E."/>
            <person name="Corby N."/>
            <person name="Coville G.J."/>
            <person name="Davies J."/>
            <person name="Deadman R."/>
            <person name="Dunn M."/>
            <person name="Earthrowl M."/>
            <person name="Ellington A.G."/>
            <person name="Errington H."/>
            <person name="Frankish A."/>
            <person name="Frankland J."/>
            <person name="French L."/>
            <person name="Garner P."/>
            <person name="Garnett J."/>
            <person name="Gay L."/>
            <person name="Ghori M.R.J."/>
            <person name="Gibson R."/>
            <person name="Gilby L.M."/>
            <person name="Gillett W."/>
            <person name="Glithero R.J."/>
            <person name="Grafham D.V."/>
            <person name="Griffiths C."/>
            <person name="Griffiths-Jones S."/>
            <person name="Grocock R."/>
            <person name="Hammond S."/>
            <person name="Harrison E.S.I."/>
            <person name="Hart E."/>
            <person name="Haugen E."/>
            <person name="Heath P.D."/>
            <person name="Holmes S."/>
            <person name="Holt K."/>
            <person name="Howden P.J."/>
            <person name="Hunt A.R."/>
            <person name="Hunt S.E."/>
            <person name="Hunter G."/>
            <person name="Isherwood J."/>
            <person name="James R."/>
            <person name="Johnson C."/>
            <person name="Johnson D."/>
            <person name="Joy A."/>
            <person name="Kay M."/>
            <person name="Kershaw J.K."/>
            <person name="Kibukawa M."/>
            <person name="Kimberley A.M."/>
            <person name="King A."/>
            <person name="Knights A.J."/>
            <person name="Lad H."/>
            <person name="Laird G."/>
            <person name="Lawlor S."/>
            <person name="Leongamornlert D.A."/>
            <person name="Lloyd D.M."/>
            <person name="Loveland J."/>
            <person name="Lovell J."/>
            <person name="Lush M.J."/>
            <person name="Lyne R."/>
            <person name="Martin S."/>
            <person name="Mashreghi-Mohammadi M."/>
            <person name="Matthews L."/>
            <person name="Matthews N.S.W."/>
            <person name="McLaren S."/>
            <person name="Milne S."/>
            <person name="Mistry S."/>
            <person name="Moore M.J.F."/>
            <person name="Nickerson T."/>
            <person name="O'Dell C.N."/>
            <person name="Oliver K."/>
            <person name="Palmeiri A."/>
            <person name="Palmer S.A."/>
            <person name="Parker A."/>
            <person name="Patel D."/>
            <person name="Pearce A.V."/>
            <person name="Peck A.I."/>
            <person name="Pelan S."/>
            <person name="Phelps K."/>
            <person name="Phillimore B.J."/>
            <person name="Plumb R."/>
            <person name="Rajan J."/>
            <person name="Raymond C."/>
            <person name="Rouse G."/>
            <person name="Saenphimmachak C."/>
            <person name="Sehra H.K."/>
            <person name="Sheridan E."/>
            <person name="Shownkeen R."/>
            <person name="Sims S."/>
            <person name="Skuce C.D."/>
            <person name="Smith M."/>
            <person name="Steward C."/>
            <person name="Subramanian S."/>
            <person name="Sycamore N."/>
            <person name="Tracey A."/>
            <person name="Tromans A."/>
            <person name="Van Helmond Z."/>
            <person name="Wall M."/>
            <person name="Wallis J.M."/>
            <person name="White S."/>
            <person name="Whitehead S.L."/>
            <person name="Wilkinson J.E."/>
            <person name="Willey D.L."/>
            <person name="Williams H."/>
            <person name="Wilming L."/>
            <person name="Wray P.W."/>
            <person name="Wu Z."/>
            <person name="Coulson A."/>
            <person name="Vaudin M."/>
            <person name="Sulston J.E."/>
            <person name="Durbin R.M."/>
            <person name="Hubbard T."/>
            <person name="Wooster R."/>
            <person name="Dunham I."/>
            <person name="Carter N.P."/>
            <person name="McVean G."/>
            <person name="Ross M.T."/>
            <person name="Harrow J."/>
            <person name="Olson M.V."/>
            <person name="Beck S."/>
            <person name="Rogers J."/>
            <person name="Bentley D.R."/>
        </authorList>
    </citation>
    <scope>NUCLEOTIDE SEQUENCE [LARGE SCALE GENOMIC DNA]</scope>
</reference>
<reference key="4">
    <citation type="journal article" date="2004" name="Genome Res.">
        <title>The status, quality, and expansion of the NIH full-length cDNA project: the Mammalian Gene Collection (MGC).</title>
        <authorList>
            <consortium name="The MGC Project Team"/>
        </authorList>
    </citation>
    <scope>NUCLEOTIDE SEQUENCE [LARGE SCALE MRNA] (ISOFORM 1)</scope>
    <source>
        <tissue>Ovary</tissue>
    </source>
</reference>
<reference key="5">
    <citation type="journal article" date="2008" name="Proc. Natl. Acad. Sci. U.S.A.">
        <title>A quantitative atlas of mitotic phosphorylation.</title>
        <authorList>
            <person name="Dephoure N."/>
            <person name="Zhou C."/>
            <person name="Villen J."/>
            <person name="Beausoleil S.A."/>
            <person name="Bakalarski C.E."/>
            <person name="Elledge S.J."/>
            <person name="Gygi S.P."/>
        </authorList>
    </citation>
    <scope>IDENTIFICATION BY MASS SPECTROMETRY [LARGE SCALE ANALYSIS]</scope>
    <source>
        <tissue>Cervix carcinoma</tissue>
    </source>
</reference>
<reference key="6">
    <citation type="journal article" date="2010" name="Sci. Signal.">
        <title>Quantitative phosphoproteomics reveals widespread full phosphorylation site occupancy during mitosis.</title>
        <authorList>
            <person name="Olsen J.V."/>
            <person name="Vermeulen M."/>
            <person name="Santamaria A."/>
            <person name="Kumar C."/>
            <person name="Miller M.L."/>
            <person name="Jensen L.J."/>
            <person name="Gnad F."/>
            <person name="Cox J."/>
            <person name="Jensen T.S."/>
            <person name="Nigg E.A."/>
            <person name="Brunak S."/>
            <person name="Mann M."/>
        </authorList>
    </citation>
    <scope>IDENTIFICATION BY MASS SPECTROMETRY [LARGE SCALE ANALYSIS]</scope>
    <source>
        <tissue>Cervix carcinoma</tissue>
    </source>
</reference>
<reference key="7">
    <citation type="journal article" date="2011" name="Proc. Natl. Acad. Sci. U.S.A.">
        <title>Proteolytic targeting of Rab29 by an effector protein distinguishes the intracellular compartments of human-adapted and broad-host Salmonella.</title>
        <authorList>
            <person name="Spano S."/>
            <person name="Liu X."/>
            <person name="Galan J.E."/>
        </authorList>
    </citation>
    <scope>FUNCTION IN SALMONELLA INFECTION</scope>
    <scope>CLEAVAGE BY GIFSY-2 BACTERIOPHAGE GTGE</scope>
    <scope>SUBCELLULAR LOCATION</scope>
</reference>
<reference key="8">
    <citation type="journal article" date="2014" name="PLoS ONE">
        <title>A role of rab29 in the integrity of the trans-Golgi network and retrograde trafficking of mannose-6-phosphate receptor.</title>
        <authorList>
            <person name="Wang S."/>
            <person name="Ma Z."/>
            <person name="Xu X."/>
            <person name="Wang Z."/>
            <person name="Sun L."/>
            <person name="Zhou Y."/>
            <person name="Lin X."/>
            <person name="Hong W."/>
            <person name="Wang T."/>
        </authorList>
    </citation>
    <scope>FUNCTION IN RETROGRADE TRANSPORT</scope>
    <scope>SUBCELLULAR LOCATION</scope>
    <scope>TISSUE SPECIFICITY</scope>
</reference>
<reference key="9">
    <citation type="journal article" date="2018" name="EMBO J.">
        <title>Rab29 activation of the Parkinson's disease-associated LRRK2 kinase.</title>
        <authorList>
            <person name="Purlyte E."/>
            <person name="Dhekne H.S."/>
            <person name="Sarhan A.R."/>
            <person name="Gomez R."/>
            <person name="Lis P."/>
            <person name="Wightman M."/>
            <person name="Martinez T.N."/>
            <person name="Tonelli F."/>
            <person name="Pfeffer S.R."/>
            <person name="Alessi D.R."/>
        </authorList>
    </citation>
    <scope>FUNCTION</scope>
    <scope>INTERACTION WITH LRRK2</scope>
    <scope>SUBCELLULAR LOCATION</scope>
    <scope>MUTAGENESIS OF THR-71; SER-72; MET-73 AND ARG-75</scope>
    <scope>PHOSPHORYLATION AT THR-71 AND SER-72</scope>
</reference>
<reference evidence="11 12 13" key="10">
    <citation type="journal article" date="2023" name="Science">
        <title>Rab29-dependent asymmetrical activation of leucine-rich repeat kinase 2.</title>
        <authorList>
            <person name="Zhu H."/>
            <person name="Tonelli F."/>
            <person name="Turk M."/>
            <person name="Prescott A."/>
            <person name="Alessi D.R."/>
            <person name="Sun J."/>
        </authorList>
    </citation>
    <scope>STRUCTURE BY ELECTRON MICROSCOPY (3.48 ANGSTROMS) OF 1-177 OF MUTANT LEU-67; ALA-71 AND ALA-72 IN COMPLEX WITH LRRK2 AND GTP ANALOG</scope>
    <scope>FUNCTION</scope>
    <scope>SUBUNIT</scope>
    <scope>INTERACTION WITH LRRK2</scope>
    <scope>SUBCELLULAR LOCATION</scope>
    <scope>PHOSPHORYLATION AT THR-71</scope>
    <scope>MUTAGENESIS OF ASP-43; TRP-62; GLN-67; LEU-71 AND LEU-72</scope>
</reference>